<accession>P13843</accession>
<feature type="signal peptide" evidence="3">
    <location>
        <begin position="1"/>
        <end position="25"/>
    </location>
</feature>
<feature type="chain" id="PRO_0000039237" description="Fusion glycoprotein F0" evidence="1">
    <location>
        <begin position="26"/>
        <end position="574"/>
    </location>
</feature>
<feature type="chain" id="PRO_0000039238" description="Fusion glycoprotein F2" evidence="1">
    <location>
        <begin position="26"/>
        <end position="109"/>
    </location>
</feature>
<feature type="peptide" id="PRO_0000432666" description="p27" evidence="1">
    <location>
        <begin position="110"/>
        <end position="136"/>
    </location>
</feature>
<feature type="chain" id="PRO_0000039239" description="Fusion glycoprotein F1">
    <location>
        <begin position="137"/>
        <end position="574"/>
    </location>
</feature>
<feature type="topological domain" description="Extracellular" evidence="1">
    <location>
        <begin position="26"/>
        <end position="524"/>
    </location>
</feature>
<feature type="transmembrane region" description="Helical" evidence="1">
    <location>
        <begin position="525"/>
        <end position="550"/>
    </location>
</feature>
<feature type="topological domain" description="Cytoplasmic" evidence="1">
    <location>
        <begin position="551"/>
        <end position="574"/>
    </location>
</feature>
<feature type="region of interest" description="Fusion peptide" evidence="2">
    <location>
        <begin position="137"/>
        <end position="157"/>
    </location>
</feature>
<feature type="coiled-coil region" evidence="2">
    <location>
        <begin position="76"/>
        <end position="96"/>
    </location>
</feature>
<feature type="coiled-coil region" evidence="2">
    <location>
        <begin position="158"/>
        <end position="209"/>
    </location>
</feature>
<feature type="coiled-coil region" evidence="2">
    <location>
        <begin position="481"/>
        <end position="516"/>
    </location>
</feature>
<feature type="site" description="Cleavage; by host furin-like protease" evidence="1">
    <location>
        <begin position="109"/>
        <end position="110"/>
    </location>
</feature>
<feature type="site" description="Cleavage; by host furin-like protease" evidence="1">
    <location>
        <begin position="136"/>
        <end position="137"/>
    </location>
</feature>
<feature type="lipid moiety-binding region" description="S-palmitoyl cysteine; by host" evidence="1">
    <location>
        <position position="550"/>
    </location>
</feature>
<feature type="glycosylation site" description="N-linked (GlcNAc...) asparagine; by host" evidence="1">
    <location>
        <position position="27"/>
    </location>
</feature>
<feature type="glycosylation site" description="N-linked (GlcNAc...) asparagine; by host" evidence="1">
    <location>
        <position position="70"/>
    </location>
</feature>
<feature type="glycosylation site" description="N-linked (GlcNAc...) asparagine; by host" evidence="3">
    <location>
        <position position="116"/>
    </location>
</feature>
<feature type="glycosylation site" description="N-linked (GlcNAc...) asparagine; by host" evidence="3">
    <location>
        <position position="120"/>
    </location>
</feature>
<feature type="glycosylation site" description="N-linked (GlcNAc...) asparagine; by host" evidence="3">
    <location>
        <position position="126"/>
    </location>
</feature>
<feature type="glycosylation site" description="N-linked (GlcNAc...) asparagine; by host" evidence="1">
    <location>
        <position position="500"/>
    </location>
</feature>
<feature type="disulfide bond" description="Interchain (between F2 and F1 chains)" evidence="1">
    <location>
        <begin position="37"/>
        <end position="439"/>
    </location>
</feature>
<feature type="disulfide bond" description="Interchain (between F2 and F1 chains)" evidence="1">
    <location>
        <begin position="69"/>
        <end position="212"/>
    </location>
</feature>
<feature type="disulfide bond" evidence="1">
    <location>
        <begin position="313"/>
        <end position="343"/>
    </location>
</feature>
<feature type="disulfide bond" evidence="1">
    <location>
        <begin position="322"/>
        <end position="333"/>
    </location>
</feature>
<feature type="disulfide bond" evidence="1">
    <location>
        <begin position="358"/>
        <end position="367"/>
    </location>
</feature>
<feature type="disulfide bond" evidence="1">
    <location>
        <begin position="382"/>
        <end position="393"/>
    </location>
</feature>
<feature type="disulfide bond" evidence="1">
    <location>
        <begin position="416"/>
        <end position="422"/>
    </location>
</feature>
<feature type="strand" evidence="5">
    <location>
        <begin position="29"/>
        <end position="33"/>
    </location>
</feature>
<feature type="turn" evidence="5">
    <location>
        <begin position="34"/>
        <end position="37"/>
    </location>
</feature>
<feature type="strand" evidence="5">
    <location>
        <begin position="38"/>
        <end position="60"/>
    </location>
</feature>
<feature type="helix" evidence="5">
    <location>
        <begin position="74"/>
        <end position="98"/>
    </location>
</feature>
<feature type="helix" evidence="5">
    <location>
        <begin position="138"/>
        <end position="141"/>
    </location>
</feature>
<feature type="helix" evidence="5">
    <location>
        <begin position="149"/>
        <end position="158"/>
    </location>
</feature>
<feature type="helix" evidence="5">
    <location>
        <begin position="163"/>
        <end position="170"/>
    </location>
</feature>
<feature type="strand" evidence="5">
    <location>
        <begin position="175"/>
        <end position="180"/>
    </location>
</feature>
<feature type="strand" evidence="5">
    <location>
        <begin position="186"/>
        <end position="194"/>
    </location>
</feature>
<feature type="helix" evidence="5">
    <location>
        <begin position="195"/>
        <end position="201"/>
    </location>
</feature>
<feature type="helix" evidence="5">
    <location>
        <begin position="204"/>
        <end position="207"/>
    </location>
</feature>
<feature type="strand" evidence="5">
    <location>
        <begin position="208"/>
        <end position="210"/>
    </location>
</feature>
<feature type="helix" evidence="5">
    <location>
        <begin position="217"/>
        <end position="238"/>
    </location>
</feature>
<feature type="turn" evidence="5">
    <location>
        <begin position="239"/>
        <end position="242"/>
    </location>
</feature>
<feature type="strand" evidence="5">
    <location>
        <begin position="243"/>
        <end position="246"/>
    </location>
</feature>
<feature type="turn" evidence="5">
    <location>
        <begin position="249"/>
        <end position="251"/>
    </location>
</feature>
<feature type="helix" evidence="5">
    <location>
        <begin position="254"/>
        <end position="263"/>
    </location>
</feature>
<feature type="strand" evidence="5">
    <location>
        <begin position="264"/>
        <end position="266"/>
    </location>
</feature>
<feature type="helix" evidence="5">
    <location>
        <begin position="268"/>
        <end position="275"/>
    </location>
</feature>
<feature type="helix" evidence="5">
    <location>
        <begin position="278"/>
        <end position="283"/>
    </location>
</feature>
<feature type="strand" evidence="5">
    <location>
        <begin position="286"/>
        <end position="293"/>
    </location>
</feature>
<feature type="strand" evidence="5">
    <location>
        <begin position="296"/>
        <end position="318"/>
    </location>
</feature>
<feature type="strand" evidence="5">
    <location>
        <begin position="333"/>
        <end position="336"/>
    </location>
</feature>
<feature type="strand" evidence="5">
    <location>
        <begin position="340"/>
        <end position="345"/>
    </location>
</feature>
<feature type="strand" evidence="5">
    <location>
        <begin position="348"/>
        <end position="354"/>
    </location>
</feature>
<feature type="helix" evidence="5">
    <location>
        <begin position="355"/>
        <end position="357"/>
    </location>
</feature>
<feature type="strand" evidence="5">
    <location>
        <begin position="358"/>
        <end position="361"/>
    </location>
</feature>
<feature type="strand" evidence="5">
    <location>
        <begin position="364"/>
        <end position="368"/>
    </location>
</feature>
<feature type="helix" evidence="5">
    <location>
        <begin position="369"/>
        <end position="371"/>
    </location>
</feature>
<feature type="strand" evidence="5">
    <location>
        <begin position="373"/>
        <end position="375"/>
    </location>
</feature>
<feature type="helix" evidence="5">
    <location>
        <begin position="377"/>
        <end position="380"/>
    </location>
</feature>
<feature type="helix" evidence="5">
    <location>
        <begin position="381"/>
        <end position="384"/>
    </location>
</feature>
<feature type="strand" evidence="5">
    <location>
        <begin position="389"/>
        <end position="391"/>
    </location>
</feature>
<feature type="strand" evidence="5">
    <location>
        <begin position="394"/>
        <end position="399"/>
    </location>
</feature>
<feature type="strand" evidence="5">
    <location>
        <begin position="404"/>
        <end position="407"/>
    </location>
</feature>
<feature type="strand" evidence="5">
    <location>
        <begin position="409"/>
        <end position="416"/>
    </location>
</feature>
<feature type="strand" evidence="5">
    <location>
        <begin position="422"/>
        <end position="426"/>
    </location>
</feature>
<feature type="turn" evidence="5">
    <location>
        <begin position="427"/>
        <end position="429"/>
    </location>
</feature>
<feature type="strand" evidence="5">
    <location>
        <begin position="430"/>
        <end position="434"/>
    </location>
</feature>
<feature type="strand" evidence="5">
    <location>
        <begin position="437"/>
        <end position="444"/>
    </location>
</feature>
<feature type="strand" evidence="5">
    <location>
        <begin position="449"/>
        <end position="452"/>
    </location>
</feature>
<feature type="strand" evidence="5">
    <location>
        <begin position="455"/>
        <end position="458"/>
    </location>
</feature>
<feature type="strand" evidence="5">
    <location>
        <begin position="465"/>
        <end position="469"/>
    </location>
</feature>
<feature type="helix" evidence="5">
    <location>
        <begin position="474"/>
        <end position="477"/>
    </location>
</feature>
<feature type="turn" evidence="5">
    <location>
        <begin position="480"/>
        <end position="482"/>
    </location>
</feature>
<feature type="strand" evidence="5">
    <location>
        <begin position="487"/>
        <end position="491"/>
    </location>
</feature>
<feature type="helix" evidence="5">
    <location>
        <begin position="492"/>
        <end position="502"/>
    </location>
</feature>
<feature type="turn" evidence="5">
    <location>
        <begin position="503"/>
        <end position="508"/>
    </location>
</feature>
<proteinExistence type="evidence at protein level"/>
<protein>
    <recommendedName>
        <fullName>Fusion glycoprotein F0</fullName>
    </recommendedName>
    <component>
        <recommendedName>
            <fullName evidence="1">Fusion glycoprotein F2</fullName>
            <shortName>F2</shortName>
        </recommendedName>
    </component>
    <component>
        <recommendedName>
            <fullName evidence="1">p27</fullName>
        </recommendedName>
        <alternativeName>
            <fullName>Intervening segment</fullName>
        </alternativeName>
        <alternativeName>
            <fullName>Pep27</fullName>
        </alternativeName>
        <alternativeName>
            <fullName>Peptide 27</fullName>
        </alternativeName>
    </component>
    <component>
        <recommendedName>
            <fullName evidence="1">Fusion glycoprotein F1</fullName>
            <shortName>F1</shortName>
        </recommendedName>
    </component>
</protein>
<sequence>MELLIHRSSAIFLTLAVNALYLTSSQNITEEFYQSTCSAVSRGYFSALRTGWYTSVITIELSNIKETKCNGTDTKVKLIKQELDKYKNAVTELQLLMQNTPAANNRARREAPQYMNYTINTTKNLNVSISKKRKRRFLGFLLGVGSAIASGIAVSKVLHLEGEVNKIKNALLSTNKAVVSLSNGVSVLTSKVLDLKNYINNRLLPIVNQQSCRISNIETVIEFQQMNSRLLEITREFSVNAGVTTPLSTYMLTNSELLSLINDMPITNDQKKLMSSNVQIVRQQSYSIMSIIKEEVLAYVVQLPIYGVIDTPCWKLHTSPLCTTNIKEGSNICLTRTDRGWYCDNAGSVSFFPQADTCKVQSNRVFCDTMNSLTLPSEVSLCNTDIFNSKYDCKIMTSKTDISSSVITSLGAIVSCYGKTKCTASNKNRGIIKTFSNGCDYVSNKGVDTVSVGNTLYYVNKLEGKNLYVKGEPIINYYDPLVFPSDEFDASISQVNEKINQSLAFIRRSDELLHNVNTGKSTTNIMITTIIIVIIVVLLSLIAIGLLLYCKAKNTPVTLSKDQLSGINNIAFSK</sequence>
<name>FUS_HRSV1</name>
<keyword id="KW-0002">3D-structure</keyword>
<keyword id="KW-0165">Cleavage on pair of basic residues</keyword>
<keyword id="KW-0175">Coiled coil</keyword>
<keyword id="KW-1015">Disulfide bond</keyword>
<keyword id="KW-1169">Fusion of virus membrane with host cell membrane</keyword>
<keyword id="KW-1168">Fusion of virus membrane with host membrane</keyword>
<keyword id="KW-0325">Glycoprotein</keyword>
<keyword id="KW-1032">Host cell membrane</keyword>
<keyword id="KW-1040">Host Golgi apparatus</keyword>
<keyword id="KW-1043">Host membrane</keyword>
<keyword id="KW-0945">Host-virus interaction</keyword>
<keyword id="KW-0449">Lipoprotein</keyword>
<keyword id="KW-0472">Membrane</keyword>
<keyword id="KW-0564">Palmitate</keyword>
<keyword id="KW-0732">Signal</keyword>
<keyword id="KW-1180">Syncytium formation induced by viral infection</keyword>
<keyword id="KW-0812">Transmembrane</keyword>
<keyword id="KW-1133">Transmembrane helix</keyword>
<keyword id="KW-1161">Viral attachment to host cell</keyword>
<keyword id="KW-1234">Viral attachment to host entry receptor</keyword>
<keyword id="KW-0261">Viral envelope protein</keyword>
<keyword id="KW-1162">Viral penetration into host cytoplasm</keyword>
<keyword id="KW-0946">Virion</keyword>
<keyword id="KW-1160">Virus entry into host cell</keyword>
<gene>
    <name type="primary">F</name>
</gene>
<organismHost>
    <name type="scientific">Homo sapiens</name>
    <name type="common">Human</name>
    <dbReference type="NCBI Taxonomy" id="9606"/>
</organismHost>
<organism>
    <name type="scientific">Human respiratory syncytial virus B (strain 18537)</name>
    <dbReference type="NCBI Taxonomy" id="11251"/>
    <lineage>
        <taxon>Viruses</taxon>
        <taxon>Riboviria</taxon>
        <taxon>Orthornavirae</taxon>
        <taxon>Negarnaviricota</taxon>
        <taxon>Haploviricotina</taxon>
        <taxon>Monjiviricetes</taxon>
        <taxon>Mononegavirales</taxon>
        <taxon>Pneumoviridae</taxon>
        <taxon>Orthopneumovirus</taxon>
        <taxon>Orthopneumovirus hominis</taxon>
    </lineage>
</organism>
<dbReference type="EMBL" id="D00334">
    <property type="protein sequence ID" value="BAA00240.1"/>
    <property type="molecule type" value="Genomic_RNA"/>
</dbReference>
<dbReference type="PIR" id="A28929">
    <property type="entry name" value="VGNZHB"/>
</dbReference>
<dbReference type="PDB" id="6Q0S">
    <property type="method" value="X-ray"/>
    <property type="resolution" value="1.94 A"/>
    <property type="chains" value="F=1-513"/>
</dbReference>
<dbReference type="PDB" id="8WZ5">
    <property type="method" value="EM"/>
    <property type="resolution" value="3.51 A"/>
    <property type="chains" value="A/B/C=24-516"/>
</dbReference>
<dbReference type="PDB" id="8WZE">
    <property type="method" value="EM"/>
    <property type="resolution" value="3.32 A"/>
    <property type="chains" value="C=50-308"/>
</dbReference>
<dbReference type="PDBsum" id="6Q0S"/>
<dbReference type="PDBsum" id="8WZ5"/>
<dbReference type="PDBsum" id="8WZE"/>
<dbReference type="SMR" id="P13843"/>
<dbReference type="DrugBank" id="DB05226">
    <property type="generic name" value="BTA9881"/>
</dbReference>
<dbReference type="DrugBank" id="DB16258">
    <property type="generic name" value="Nirsevimab"/>
</dbReference>
<dbReference type="DrugBank" id="DB00110">
    <property type="generic name" value="Palivizumab"/>
</dbReference>
<dbReference type="GlyCosmos" id="P13843">
    <property type="glycosylation" value="6 sites, No reported glycans"/>
</dbReference>
<dbReference type="GO" id="GO:0044178">
    <property type="term" value="C:host cell Golgi membrane"/>
    <property type="evidence" value="ECO:0007669"/>
    <property type="project" value="UniProtKB-SubCell"/>
</dbReference>
<dbReference type="GO" id="GO:0020002">
    <property type="term" value="C:host cell plasma membrane"/>
    <property type="evidence" value="ECO:0007669"/>
    <property type="project" value="UniProtKB-SubCell"/>
</dbReference>
<dbReference type="GO" id="GO:0016020">
    <property type="term" value="C:membrane"/>
    <property type="evidence" value="ECO:0007669"/>
    <property type="project" value="UniProtKB-KW"/>
</dbReference>
<dbReference type="GO" id="GO:0019031">
    <property type="term" value="C:viral envelope"/>
    <property type="evidence" value="ECO:0007669"/>
    <property type="project" value="UniProtKB-KW"/>
</dbReference>
<dbReference type="GO" id="GO:0055036">
    <property type="term" value="C:virion membrane"/>
    <property type="evidence" value="ECO:0007669"/>
    <property type="project" value="UniProtKB-SubCell"/>
</dbReference>
<dbReference type="GO" id="GO:0098670">
    <property type="term" value="P:entry receptor-mediated virion attachment to host cell"/>
    <property type="evidence" value="ECO:0007669"/>
    <property type="project" value="UniProtKB-KW"/>
</dbReference>
<dbReference type="GO" id="GO:0019064">
    <property type="term" value="P:fusion of virus membrane with host plasma membrane"/>
    <property type="evidence" value="ECO:0007669"/>
    <property type="project" value="UniProtKB-KW"/>
</dbReference>
<dbReference type="GO" id="GO:0046718">
    <property type="term" value="P:symbiont entry into host cell"/>
    <property type="evidence" value="ECO:0007669"/>
    <property type="project" value="UniProtKB-KW"/>
</dbReference>
<dbReference type="GO" id="GO:0060141">
    <property type="term" value="P:symbiont-mediated induction of syncytium formation"/>
    <property type="evidence" value="ECO:0007669"/>
    <property type="project" value="UniProtKB-KW"/>
</dbReference>
<dbReference type="FunFam" id="1.10.287.2480:FF:000001">
    <property type="entry name" value="Fusion glycoprotein F0"/>
    <property type="match status" value="1"/>
</dbReference>
<dbReference type="Gene3D" id="1.10.287.2480">
    <property type="match status" value="2"/>
</dbReference>
<dbReference type="Gene3D" id="6.10.250.1160">
    <property type="match status" value="1"/>
</dbReference>
<dbReference type="Gene3D" id="6.20.370.50">
    <property type="match status" value="1"/>
</dbReference>
<dbReference type="InterPro" id="IPR000776">
    <property type="entry name" value="Fusion_F0_Paramyxovir"/>
</dbReference>
<dbReference type="Pfam" id="PF00523">
    <property type="entry name" value="Fusion_gly"/>
    <property type="match status" value="1"/>
</dbReference>
<dbReference type="SUPFAM" id="SSF58069">
    <property type="entry name" value="Virus ectodomain"/>
    <property type="match status" value="2"/>
</dbReference>
<comment type="function">
    <molecule>Fusion glycoprotein F0</molecule>
    <text evidence="1">Inactive precursor that is cleaved at two sites by a furin-like protease to give rise to the mature F1 and F2 fusion glycoproteins.</text>
</comment>
<comment type="function">
    <molecule>Fusion glycoprotein F1</molecule>
    <text evidence="1">Class I viral fusion protein. Under the current model, the protein has at least 3 conformational states: pre-fusion native state, pre-hairpin intermediate state, and post-fusion hairpin state. During viral and plasma cell membrane fusion, the coiled coil regions assume a trimer-of-hairpins structure, positioning the fusion peptide in close proximity to the C-terminal region of the ectodomain. The formation of this structure appears to drive apposition and subsequent fusion of viral and cellular membranes leading to delivery of the nucleocapsid into the cytoplasm. This fusion is pH independent and occurs at the plasma or endosomal membrane. The trimer of F1-F2 (F protein) also facilitates the attachment to host cell by binding to host heparan sulfate. F protein is involved in the entry into the host cell through the interaction with host IGF1R. This interaction activates PRKCZ/PKCzeta that recruits host NCL/nucleolin to the apical cell surface where it can bind fusion glycoprotein F1. Later in infection, F protein expressed at the plasma membrane of infected cells can mediate fusion with adjacent cells to form syncytia, a cytopathic effect that could lead to tissue necrosis. F protein may trigger p53-dependent apoptosis.</text>
</comment>
<comment type="function">
    <molecule>Fusion glycoprotein F2</molecule>
    <text evidence="1">Major determinant of the species specificity of RSV infection. The trimer of F1-F2 (F protein) also facilitates the attachment to host cell by binding to host heparan sulfate. F protein is involved in the entry into the host cell through the interaction with host IGF1R. This interaction activates PRKCZ/PKCzeta that recruits host NCL/nucleolin to the apical cell surface where it can bind fusion glycoprotein F1. Later in infection, F protein expressed at the plasma membrane of infected cells can mediate fusion with adjacent cells to form syncytia, a cytopathic effect that could lead to tissue necrosis. F protein seems to trigger p53-dependent apoptosis.</text>
</comment>
<comment type="subunit">
    <molecule>Fusion glycoprotein F1</molecule>
    <text evidence="1">Homotrimer. Heterodimer with fusion protein F2; disulfide-linked. Interacts with host NCL; this interaction plays a role in viral entry into the host cell. As a heterodimer with F2, interacts with host heparan sulfate. As a heterodimer with F2, interacts with host IGF1R; this interaction activates PRKCZ/PKCzeta that recruits NCL/nucleolin from the host nucleus to the plasma membrane. Part of a complex composed of F1, F2 and G glycoproteins. As a heterodimer with F2, interacts with host RHOA; this interaction facilitates virus-induced syncytium formation.</text>
</comment>
<comment type="subunit">
    <molecule>Fusion glycoprotein F2</molecule>
    <text evidence="1">Homotrimer. Heterodimer with fusion protein F1; disulfide-linked. As a heterodimer with F1, interacts with host heparan sulfate. As a heterodimer with F1, interacts with host IGF1R; this interaction activates PRKCZ/PKCzeta that recruits NCL/nucleolin from the host nucleus to the plasma membrane. Part of a complex composed of F1, F2 and G glycoproteins. As a heterodimer with F1, interacts with host RHOA; this interaction facilitates virus-induced syncytium formation.</text>
</comment>
<comment type="subcellular location">
    <molecule>Fusion glycoprotein F0</molecule>
    <subcellularLocation>
        <location evidence="1">Host Golgi apparatus membrane</location>
        <topology evidence="1">Single-pass membrane protein</topology>
    </subcellularLocation>
</comment>
<comment type="subcellular location">
    <molecule>Fusion glycoprotein F1</molecule>
    <subcellularLocation>
        <location evidence="1">Virion membrane</location>
        <topology evidence="1">Single-pass type I membrane protein</topology>
    </subcellularLocation>
    <subcellularLocation>
        <location evidence="1">Host cell membrane</location>
        <topology evidence="1">Single-pass membrane protein</topology>
    </subcellularLocation>
    <text evidence="1">Localized at the host apical membrane.</text>
</comment>
<comment type="subcellular location">
    <molecule>Fusion glycoprotein F2</molecule>
    <subcellularLocation>
        <location evidence="1">Virion membrane</location>
    </subcellularLocation>
    <subcellularLocation>
        <location evidence="1">Host cell membrane</location>
    </subcellularLocation>
    <text evidence="1">Localized at the host apical membrane.</text>
</comment>
<comment type="domain">
    <molecule>Fusion glycoprotein F0</molecule>
    <text evidence="1 2">The N-terminus is a hydrophobic fusion peptide that inserts into the target host membrane (By similarity). It is buried in the center of the trimer cavity before cleavage by host furin. The coiled coil (heptad repeat) regions are probably involved in homotrimerization, heterodimerization and in the formation of a fusion-active hairpin structure (By similarity).</text>
</comment>
<comment type="domain">
    <molecule>Fusion glycoprotein F1</molecule>
    <text evidence="1 2">The N-terminus is a hydrophobic fusion peptide that inserts into the target host membrane (By similarity). It is buried in the center of the trimer cavity before cleavage by host furin. The coiled coil (heptad repeat) regions are probably involved in homotrimerization, heterodimerization and in the formation of a fusion-active hairpin structure (By similarity).</text>
</comment>
<comment type="PTM">
    <molecule>Fusion glycoprotein F0</molecule>
    <text evidence="1">The F glycoprotein is synthesized as a F0 inactive precursor that is heavily N-glycosylated and processed at two sites by a host furin-like protease probably in the Golgi. The cleavage site between p27 and F1 may occur after endocytosis to yield the mature F1 and F2 proteins. Both cleavages are required for membrane fusion and p27 is released from the processed protein.</text>
</comment>
<comment type="similarity">
    <text evidence="4">Belongs to the paramyxoviruses fusion glycoprotein family.</text>
</comment>
<evidence type="ECO:0000250" key="1">
    <source>
        <dbReference type="UniProtKB" id="P03420"/>
    </source>
</evidence>
<evidence type="ECO:0000250" key="2">
    <source>
        <dbReference type="UniProtKB" id="P11209"/>
    </source>
</evidence>
<evidence type="ECO:0000255" key="3"/>
<evidence type="ECO:0000305" key="4"/>
<evidence type="ECO:0007829" key="5">
    <source>
        <dbReference type="PDB" id="6Q0S"/>
    </source>
</evidence>
<reference key="1">
    <citation type="journal article" date="1988" name="J. Gen. Virol.">
        <title>The fusion glycoproteins of human respiratory syncytial virus of subgroups A and B: sequence conservation provides a structural basis for antigenic relatedness.</title>
        <authorList>
            <person name="Johnson P.R."/>
            <person name="Collins P.L."/>
        </authorList>
    </citation>
    <scope>NUCLEOTIDE SEQUENCE [GENOMIC RNA]</scope>
</reference>